<reference key="1">
    <citation type="journal article" date="2001" name="Nature">
        <title>Complete genome sequence of a multiple drug resistant Salmonella enterica serovar Typhi CT18.</title>
        <authorList>
            <person name="Parkhill J."/>
            <person name="Dougan G."/>
            <person name="James K.D."/>
            <person name="Thomson N.R."/>
            <person name="Pickard D."/>
            <person name="Wain J."/>
            <person name="Churcher C.M."/>
            <person name="Mungall K.L."/>
            <person name="Bentley S.D."/>
            <person name="Holden M.T.G."/>
            <person name="Sebaihia M."/>
            <person name="Baker S."/>
            <person name="Basham D."/>
            <person name="Brooks K."/>
            <person name="Chillingworth T."/>
            <person name="Connerton P."/>
            <person name="Cronin A."/>
            <person name="Davis P."/>
            <person name="Davies R.M."/>
            <person name="Dowd L."/>
            <person name="White N."/>
            <person name="Farrar J."/>
            <person name="Feltwell T."/>
            <person name="Hamlin N."/>
            <person name="Haque A."/>
            <person name="Hien T.T."/>
            <person name="Holroyd S."/>
            <person name="Jagels K."/>
            <person name="Krogh A."/>
            <person name="Larsen T.S."/>
            <person name="Leather S."/>
            <person name="Moule S."/>
            <person name="O'Gaora P."/>
            <person name="Parry C."/>
            <person name="Quail M.A."/>
            <person name="Rutherford K.M."/>
            <person name="Simmonds M."/>
            <person name="Skelton J."/>
            <person name="Stevens K."/>
            <person name="Whitehead S."/>
            <person name="Barrell B.G."/>
        </authorList>
    </citation>
    <scope>NUCLEOTIDE SEQUENCE [LARGE SCALE GENOMIC DNA]</scope>
    <source>
        <strain>CT18</strain>
    </source>
</reference>
<reference key="2">
    <citation type="journal article" date="2003" name="J. Bacteriol.">
        <title>Comparative genomics of Salmonella enterica serovar Typhi strains Ty2 and CT18.</title>
        <authorList>
            <person name="Deng W."/>
            <person name="Liou S.-R."/>
            <person name="Plunkett G. III"/>
            <person name="Mayhew G.F."/>
            <person name="Rose D.J."/>
            <person name="Burland V."/>
            <person name="Kodoyianni V."/>
            <person name="Schwartz D.C."/>
            <person name="Blattner F.R."/>
        </authorList>
    </citation>
    <scope>NUCLEOTIDE SEQUENCE [LARGE SCALE GENOMIC DNA]</scope>
    <source>
        <strain>ATCC 700931 / Ty2</strain>
    </source>
</reference>
<dbReference type="EMBL" id="AL513382">
    <property type="protein sequence ID" value="CAD07787.1"/>
    <property type="molecule type" value="Genomic_DNA"/>
</dbReference>
<dbReference type="EMBL" id="AE014613">
    <property type="protein sequence ID" value="AAO70723.1"/>
    <property type="molecule type" value="Genomic_DNA"/>
</dbReference>
<dbReference type="RefSeq" id="NP_457649.1">
    <property type="nucleotide sequence ID" value="NC_003198.1"/>
</dbReference>
<dbReference type="RefSeq" id="WP_000057282.1">
    <property type="nucleotide sequence ID" value="NZ_WSUR01000003.1"/>
</dbReference>
<dbReference type="SMR" id="Q8Z3I8"/>
<dbReference type="STRING" id="220341.gene:17587298"/>
<dbReference type="KEGG" id="stt:t3185"/>
<dbReference type="KEGG" id="sty:STY3448"/>
<dbReference type="PATRIC" id="fig|220341.7.peg.3510"/>
<dbReference type="eggNOG" id="COG0792">
    <property type="taxonomic scope" value="Bacteria"/>
</dbReference>
<dbReference type="HOGENOM" id="CLU_115353_1_0_6"/>
<dbReference type="OMA" id="TVLERNW"/>
<dbReference type="OrthoDB" id="9794876at2"/>
<dbReference type="Proteomes" id="UP000000541">
    <property type="component" value="Chromosome"/>
</dbReference>
<dbReference type="Proteomes" id="UP000002670">
    <property type="component" value="Chromosome"/>
</dbReference>
<dbReference type="GO" id="GO:0003676">
    <property type="term" value="F:nucleic acid binding"/>
    <property type="evidence" value="ECO:0007669"/>
    <property type="project" value="InterPro"/>
</dbReference>
<dbReference type="Gene3D" id="3.40.1350.10">
    <property type="match status" value="1"/>
</dbReference>
<dbReference type="HAMAP" id="MF_00048">
    <property type="entry name" value="UPF0102"/>
    <property type="match status" value="1"/>
</dbReference>
<dbReference type="InterPro" id="IPR011335">
    <property type="entry name" value="Restrct_endonuc-II-like"/>
</dbReference>
<dbReference type="InterPro" id="IPR011856">
    <property type="entry name" value="tRNA_endonuc-like_dom_sf"/>
</dbReference>
<dbReference type="InterPro" id="IPR003509">
    <property type="entry name" value="UPF0102_YraN-like"/>
</dbReference>
<dbReference type="NCBIfam" id="NF009150">
    <property type="entry name" value="PRK12497.1-3"/>
    <property type="match status" value="1"/>
</dbReference>
<dbReference type="NCBIfam" id="TIGR00252">
    <property type="entry name" value="YraN family protein"/>
    <property type="match status" value="1"/>
</dbReference>
<dbReference type="PANTHER" id="PTHR34039">
    <property type="entry name" value="UPF0102 PROTEIN YRAN"/>
    <property type="match status" value="1"/>
</dbReference>
<dbReference type="PANTHER" id="PTHR34039:SF1">
    <property type="entry name" value="UPF0102 PROTEIN YRAN"/>
    <property type="match status" value="1"/>
</dbReference>
<dbReference type="Pfam" id="PF02021">
    <property type="entry name" value="UPF0102"/>
    <property type="match status" value="1"/>
</dbReference>
<dbReference type="SUPFAM" id="SSF52980">
    <property type="entry name" value="Restriction endonuclease-like"/>
    <property type="match status" value="1"/>
</dbReference>
<sequence>MAQIPARGDCSRQLTRKQAGDAWEAAARLWLESKGLRFIAANVRERGGEIDLIMRDGKTTVFVEVRYRRSGLYGGAAASVTRSKQHKLLHTARLWLARQNGSFDTVDCRFDVLAFTGNEIEWFRDAFNDHS</sequence>
<comment type="similarity">
    <text evidence="1">Belongs to the UPF0102 family.</text>
</comment>
<protein>
    <recommendedName>
        <fullName evidence="1">UPF0102 protein YraN</fullName>
    </recommendedName>
</protein>
<gene>
    <name evidence="1" type="primary">yraN</name>
    <name type="ordered locus">STY3448</name>
    <name type="ordered locus">t3185</name>
</gene>
<feature type="chain" id="PRO_0000167377" description="UPF0102 protein YraN">
    <location>
        <begin position="1"/>
        <end position="131"/>
    </location>
</feature>
<name>YRAN_SALTI</name>
<organism>
    <name type="scientific">Salmonella typhi</name>
    <dbReference type="NCBI Taxonomy" id="90370"/>
    <lineage>
        <taxon>Bacteria</taxon>
        <taxon>Pseudomonadati</taxon>
        <taxon>Pseudomonadota</taxon>
        <taxon>Gammaproteobacteria</taxon>
        <taxon>Enterobacterales</taxon>
        <taxon>Enterobacteriaceae</taxon>
        <taxon>Salmonella</taxon>
    </lineage>
</organism>
<proteinExistence type="inferred from homology"/>
<evidence type="ECO:0000255" key="1">
    <source>
        <dbReference type="HAMAP-Rule" id="MF_00048"/>
    </source>
</evidence>
<accession>Q8Z3I8</accession>